<gene>
    <name evidence="4" type="primary">RPS22B</name>
    <name type="synonym">RPS24B</name>
    <name type="ordered locus">YLR367W</name>
    <name type="ORF">L8039.6</name>
</gene>
<protein>
    <recommendedName>
        <fullName evidence="3">Small ribosomal subunit protein uS8B</fullName>
    </recommendedName>
    <alternativeName>
        <fullName evidence="4">40S ribosomal protein S22-B</fullName>
    </alternativeName>
    <alternativeName>
        <fullName>RP50</fullName>
    </alternativeName>
    <alternativeName>
        <fullName>S24</fullName>
    </alternativeName>
    <alternativeName>
        <fullName>YP58</fullName>
    </alternativeName>
    <alternativeName>
        <fullName>YS22</fullName>
    </alternativeName>
</protein>
<proteinExistence type="evidence at protein level"/>
<reference key="1">
    <citation type="journal article" date="1997" name="Nature">
        <title>The nucleotide sequence of Saccharomyces cerevisiae chromosome XII.</title>
        <authorList>
            <person name="Johnston M."/>
            <person name="Hillier L.W."/>
            <person name="Riles L."/>
            <person name="Albermann K."/>
            <person name="Andre B."/>
            <person name="Ansorge W."/>
            <person name="Benes V."/>
            <person name="Brueckner M."/>
            <person name="Delius H."/>
            <person name="Dubois E."/>
            <person name="Duesterhoeft A."/>
            <person name="Entian K.-D."/>
            <person name="Floeth M."/>
            <person name="Goffeau A."/>
            <person name="Hebling U."/>
            <person name="Heumann K."/>
            <person name="Heuss-Neitzel D."/>
            <person name="Hilbert H."/>
            <person name="Hilger F."/>
            <person name="Kleine K."/>
            <person name="Koetter P."/>
            <person name="Louis E.J."/>
            <person name="Messenguy F."/>
            <person name="Mewes H.-W."/>
            <person name="Miosga T."/>
            <person name="Moestl D."/>
            <person name="Mueller-Auer S."/>
            <person name="Nentwich U."/>
            <person name="Obermaier B."/>
            <person name="Piravandi E."/>
            <person name="Pohl T.M."/>
            <person name="Portetelle D."/>
            <person name="Purnelle B."/>
            <person name="Rechmann S."/>
            <person name="Rieger M."/>
            <person name="Rinke M."/>
            <person name="Rose M."/>
            <person name="Scharfe M."/>
            <person name="Scherens B."/>
            <person name="Scholler P."/>
            <person name="Schwager C."/>
            <person name="Schwarz S."/>
            <person name="Underwood A.P."/>
            <person name="Urrestarazu L.A."/>
            <person name="Vandenbol M."/>
            <person name="Verhasselt P."/>
            <person name="Vierendeels F."/>
            <person name="Voet M."/>
            <person name="Volckaert G."/>
            <person name="Voss H."/>
            <person name="Wambutt R."/>
            <person name="Wedler E."/>
            <person name="Wedler H."/>
            <person name="Zimmermann F.K."/>
            <person name="Zollner A."/>
            <person name="Hani J."/>
            <person name="Hoheisel J.D."/>
        </authorList>
    </citation>
    <scope>NUCLEOTIDE SEQUENCE [LARGE SCALE GENOMIC DNA]</scope>
    <source>
        <strain>ATCC 204508 / S288c</strain>
    </source>
</reference>
<reference key="2">
    <citation type="journal article" date="2014" name="G3 (Bethesda)">
        <title>The reference genome sequence of Saccharomyces cerevisiae: Then and now.</title>
        <authorList>
            <person name="Engel S.R."/>
            <person name="Dietrich F.S."/>
            <person name="Fisk D.G."/>
            <person name="Binkley G."/>
            <person name="Balakrishnan R."/>
            <person name="Costanzo M.C."/>
            <person name="Dwight S.S."/>
            <person name="Hitz B.C."/>
            <person name="Karra K."/>
            <person name="Nash R.S."/>
            <person name="Weng S."/>
            <person name="Wong E.D."/>
            <person name="Lloyd P."/>
            <person name="Skrzypek M.S."/>
            <person name="Miyasato S.R."/>
            <person name="Simison M."/>
            <person name="Cherry J.M."/>
        </authorList>
    </citation>
    <scope>GENOME REANNOTATION</scope>
    <source>
        <strain>ATCC 204508 / S288c</strain>
    </source>
</reference>
<reference key="3">
    <citation type="journal article" date="1998" name="Yeast">
        <title>The list of cytoplasmic ribosomal proteins of Saccharomyces cerevisiae.</title>
        <authorList>
            <person name="Planta R.J."/>
            <person name="Mager W.H."/>
        </authorList>
    </citation>
    <scope>NOMENCLATURE</scope>
    <scope>SUBUNIT</scope>
</reference>
<reference key="4">
    <citation type="journal article" date="2003" name="Nature">
        <title>Global analysis of protein expression in yeast.</title>
        <authorList>
            <person name="Ghaemmaghami S."/>
            <person name="Huh W.-K."/>
            <person name="Bower K."/>
            <person name="Howson R.W."/>
            <person name="Belle A."/>
            <person name="Dephoure N."/>
            <person name="O'Shea E.K."/>
            <person name="Weissman J.S."/>
        </authorList>
    </citation>
    <scope>LEVEL OF PROTEIN EXPRESSION [LARGE SCALE ANALYSIS]</scope>
</reference>
<reference key="5">
    <citation type="journal article" date="2011" name="Science">
        <title>The structure of the eukaryotic ribosome at 3.0 A resolution.</title>
        <authorList>
            <person name="Ben-Shem A."/>
            <person name="Garreau de Loubresse N."/>
            <person name="Melnikov S."/>
            <person name="Jenner L."/>
            <person name="Yusupova G."/>
            <person name="Yusupov M."/>
        </authorList>
    </citation>
    <scope>SUBUNIT</scope>
    <scope>SUBCELLULAR LOCATION</scope>
</reference>
<reference key="6">
    <citation type="journal article" date="2014" name="Curr. Opin. Struct. Biol.">
        <title>A new system for naming ribosomal proteins.</title>
        <authorList>
            <person name="Ban N."/>
            <person name="Beckmann R."/>
            <person name="Cate J.H.D."/>
            <person name="Dinman J.D."/>
            <person name="Dragon F."/>
            <person name="Ellis S.R."/>
            <person name="Lafontaine D.L.J."/>
            <person name="Lindahl L."/>
            <person name="Liljas A."/>
            <person name="Lipton J.M."/>
            <person name="McAlear M.A."/>
            <person name="Moore P.B."/>
            <person name="Noller H.F."/>
            <person name="Ortega J."/>
            <person name="Panse V.G."/>
            <person name="Ramakrishnan V."/>
            <person name="Spahn C.M.T."/>
            <person name="Steitz T.A."/>
            <person name="Tchorzewski M."/>
            <person name="Tollervey D."/>
            <person name="Warren A.J."/>
            <person name="Williamson J.R."/>
            <person name="Wilson D."/>
            <person name="Yonath A."/>
            <person name="Yusupov M."/>
        </authorList>
    </citation>
    <scope>NOMENCLATURE</scope>
</reference>
<accession>Q3E7Y3</accession>
<accession>D6VZ04</accession>
<accession>P04648</accession>
<name>RS22B_YEAST</name>
<comment type="function">
    <text evidence="6">Component of the ribosome, a large ribonucleoprotein complex responsible for the synthesis of proteins in the cell. The small ribosomal subunit (SSU) binds messenger RNAs (mRNAs) and translates the encoded message by selecting cognate aminoacyl-transfer RNA (tRNA) molecules. The large subunit (LSU) contains the ribosomal catalytic site termed the peptidyl transferase center (PTC), which catalyzes the formation of peptide bonds, thereby polymerizing the amino acids delivered by tRNAs into a polypeptide chain. The nascent polypeptides leave the ribosome through a tunnel in the LSU and interact with protein factors that function in enzymatic processing, targeting, and the membrane insertion of nascent chains at the exit of the ribosomal tunnel.</text>
</comment>
<comment type="subunit">
    <text evidence="2 7">Component of the small ribosomal subunit (SSU). Mature yeast ribosomes consist of a small (40S) and a large (60S) subunit. The 40S small subunit contains 1 molecule of ribosomal RNA (18S rRNA) and 33 different proteins (encoded by 57 genes). The large 60S subunit contains 3 rRNA molecules (25S, 5.8S and 5S rRNA) and 46 different proteins (encoded by 81 genes) (PubMed:22096102, PubMed:9559554).</text>
</comment>
<comment type="subcellular location">
    <subcellularLocation>
        <location evidence="2">Cytoplasm</location>
    </subcellularLocation>
</comment>
<comment type="miscellaneous">
    <text evidence="1">Present with 19700 molecules/cell in log phase SD medium.</text>
</comment>
<comment type="miscellaneous">
    <text evidence="5">There are 2 genes for uS8 in yeast.</text>
</comment>
<comment type="similarity">
    <text evidence="5">Belongs to the universal ribosomal protein uS8 family.</text>
</comment>
<organism>
    <name type="scientific">Saccharomyces cerevisiae (strain ATCC 204508 / S288c)</name>
    <name type="common">Baker's yeast</name>
    <dbReference type="NCBI Taxonomy" id="559292"/>
    <lineage>
        <taxon>Eukaryota</taxon>
        <taxon>Fungi</taxon>
        <taxon>Dikarya</taxon>
        <taxon>Ascomycota</taxon>
        <taxon>Saccharomycotina</taxon>
        <taxon>Saccharomycetes</taxon>
        <taxon>Saccharomycetales</taxon>
        <taxon>Saccharomycetaceae</taxon>
        <taxon>Saccharomyces</taxon>
    </lineage>
</organism>
<feature type="chain" id="PRO_0000126624" description="Small ribosomal subunit protein uS8B">
    <location>
        <begin position="1"/>
        <end position="130"/>
    </location>
</feature>
<keyword id="KW-0002">3D-structure</keyword>
<keyword id="KW-0963">Cytoplasm</keyword>
<keyword id="KW-1185">Reference proteome</keyword>
<keyword id="KW-0687">Ribonucleoprotein</keyword>
<keyword id="KW-0689">Ribosomal protein</keyword>
<evidence type="ECO:0000269" key="1">
    <source>
    </source>
</evidence>
<evidence type="ECO:0000269" key="2">
    <source>
    </source>
</evidence>
<evidence type="ECO:0000303" key="3">
    <source>
    </source>
</evidence>
<evidence type="ECO:0000303" key="4">
    <source>
    </source>
</evidence>
<evidence type="ECO:0000305" key="5"/>
<evidence type="ECO:0000305" key="6">
    <source>
    </source>
</evidence>
<evidence type="ECO:0000305" key="7">
    <source>
    </source>
</evidence>
<sequence>MTRSSVLADALNAINNAEKTGKRQVLLRPSSKVIIKFLQVMQKHGYIGEFEYIDDHRSGKIVVQLNGRLNKCGVISPRFNVKIGDIEKWTANLLPARQFGYVILTTSAGIMDHEEARRKHVSGKILGFVY</sequence>
<dbReference type="EMBL" id="U19103">
    <property type="protein sequence ID" value="AAB67567.1"/>
    <property type="molecule type" value="Genomic_DNA"/>
</dbReference>
<dbReference type="EMBL" id="BK006945">
    <property type="protein sequence ID" value="DAA09670.1"/>
    <property type="molecule type" value="Genomic_DNA"/>
</dbReference>
<dbReference type="PIR" id="S51385">
    <property type="entry name" value="S51385"/>
</dbReference>
<dbReference type="RefSeq" id="NP_013471.1">
    <property type="nucleotide sequence ID" value="NM_001182256.1"/>
</dbReference>
<dbReference type="PDB" id="6KE6">
    <property type="method" value="EM"/>
    <property type="resolution" value="3.40 A"/>
    <property type="chains" value="SX=1-130"/>
</dbReference>
<dbReference type="PDB" id="6LQP">
    <property type="method" value="EM"/>
    <property type="resolution" value="3.20 A"/>
    <property type="chains" value="SX=1-130"/>
</dbReference>
<dbReference type="PDB" id="6LQQ">
    <property type="method" value="EM"/>
    <property type="resolution" value="4.10 A"/>
    <property type="chains" value="SX=1-130"/>
</dbReference>
<dbReference type="PDB" id="6LQR">
    <property type="method" value="EM"/>
    <property type="resolution" value="8.60 A"/>
    <property type="chains" value="SX=1-130"/>
</dbReference>
<dbReference type="PDB" id="6LQS">
    <property type="method" value="EM"/>
    <property type="resolution" value="3.80 A"/>
    <property type="chains" value="SX=1-130"/>
</dbReference>
<dbReference type="PDB" id="6LQT">
    <property type="method" value="EM"/>
    <property type="resolution" value="4.90 A"/>
    <property type="chains" value="SX=1-130"/>
</dbReference>
<dbReference type="PDB" id="6LQU">
    <property type="method" value="EM"/>
    <property type="resolution" value="3.70 A"/>
    <property type="chains" value="SX=1-130"/>
</dbReference>
<dbReference type="PDB" id="7D4I">
    <property type="method" value="EM"/>
    <property type="resolution" value="4.00 A"/>
    <property type="chains" value="SX=1-130"/>
</dbReference>
<dbReference type="PDB" id="7D5T">
    <property type="method" value="EM"/>
    <property type="resolution" value="6.00 A"/>
    <property type="chains" value="SX=1-130"/>
</dbReference>
<dbReference type="PDB" id="7D63">
    <property type="method" value="EM"/>
    <property type="resolution" value="12.30 A"/>
    <property type="chains" value="SX=1-130"/>
</dbReference>
<dbReference type="PDBsum" id="6KE6"/>
<dbReference type="PDBsum" id="6LQP"/>
<dbReference type="PDBsum" id="6LQQ"/>
<dbReference type="PDBsum" id="6LQR"/>
<dbReference type="PDBsum" id="6LQS"/>
<dbReference type="PDBsum" id="6LQT"/>
<dbReference type="PDBsum" id="6LQU"/>
<dbReference type="PDBsum" id="7D4I"/>
<dbReference type="PDBsum" id="7D5T"/>
<dbReference type="PDBsum" id="7D63"/>
<dbReference type="EMDB" id="EMD-0949"/>
<dbReference type="EMDB" id="EMD-0950"/>
<dbReference type="EMDB" id="EMD-0951"/>
<dbReference type="EMDB" id="EMD-0952"/>
<dbReference type="EMDB" id="EMD-0953"/>
<dbReference type="EMDB" id="EMD-0954"/>
<dbReference type="EMDB" id="EMD-30574"/>
<dbReference type="EMDB" id="EMD-30585"/>
<dbReference type="EMDB" id="EMD-30588"/>
<dbReference type="EMDB" id="EMD-9964"/>
<dbReference type="SMR" id="Q3E7Y3"/>
<dbReference type="BioGRID" id="31627">
    <property type="interactions" value="184"/>
</dbReference>
<dbReference type="ComplexPortal" id="CPX-1599">
    <property type="entry name" value="40S cytosolic small ribosomal subunit"/>
</dbReference>
<dbReference type="FunCoup" id="Q3E7Y3">
    <property type="interactions" value="1299"/>
</dbReference>
<dbReference type="IntAct" id="Q3E7Y3">
    <property type="interactions" value="67"/>
</dbReference>
<dbReference type="MINT" id="Q3E7Y3"/>
<dbReference type="STRING" id="4932.YLR367W"/>
<dbReference type="iPTMnet" id="Q3E7Y3"/>
<dbReference type="PaxDb" id="4932-YLR367W"/>
<dbReference type="TopDownProteomics" id="Q3E7Y3"/>
<dbReference type="EnsemblFungi" id="YLR367W_mRNA">
    <property type="protein sequence ID" value="YLR367W"/>
    <property type="gene ID" value="YLR367W"/>
</dbReference>
<dbReference type="GeneID" id="851082"/>
<dbReference type="KEGG" id="sce:YLR367W"/>
<dbReference type="AGR" id="SGD:S000004359"/>
<dbReference type="SGD" id="S000004359">
    <property type="gene designation" value="RPS22B"/>
</dbReference>
<dbReference type="VEuPathDB" id="FungiDB:YLR367W"/>
<dbReference type="eggNOG" id="KOG1754">
    <property type="taxonomic scope" value="Eukaryota"/>
</dbReference>
<dbReference type="GeneTree" id="ENSGT00950000183198"/>
<dbReference type="HOGENOM" id="CLU_098428_1_1_1"/>
<dbReference type="InParanoid" id="Q3E7Y3"/>
<dbReference type="OMA" id="EWANNIL"/>
<dbReference type="OrthoDB" id="10250260at2759"/>
<dbReference type="BioCyc" id="YEAST:G3O-32436-MONOMER"/>
<dbReference type="BioGRID-ORCS" id="851082">
    <property type="hits" value="8 hits in 10 CRISPR screens"/>
</dbReference>
<dbReference type="CD-CODE" id="BDAE0F88">
    <property type="entry name" value="Nucleolus"/>
</dbReference>
<dbReference type="ChiTaRS" id="RPS22B">
    <property type="organism name" value="yeast"/>
</dbReference>
<dbReference type="PRO" id="PR:Q3E7Y3"/>
<dbReference type="Proteomes" id="UP000002311">
    <property type="component" value="Chromosome XII"/>
</dbReference>
<dbReference type="RNAct" id="Q3E7Y3">
    <property type="molecule type" value="protein"/>
</dbReference>
<dbReference type="GO" id="GO:0005829">
    <property type="term" value="C:cytosol"/>
    <property type="evidence" value="ECO:0000304"/>
    <property type="project" value="Reactome"/>
</dbReference>
<dbReference type="GO" id="GO:0022627">
    <property type="term" value="C:cytosolic small ribosomal subunit"/>
    <property type="evidence" value="ECO:0000314"/>
    <property type="project" value="SGD"/>
</dbReference>
<dbReference type="GO" id="GO:0003735">
    <property type="term" value="F:structural constituent of ribosome"/>
    <property type="evidence" value="ECO:0000314"/>
    <property type="project" value="SGD"/>
</dbReference>
<dbReference type="GO" id="GO:0002181">
    <property type="term" value="P:cytoplasmic translation"/>
    <property type="evidence" value="ECO:0000305"/>
    <property type="project" value="SGD"/>
</dbReference>
<dbReference type="FunFam" id="3.30.1370.30:FF:000001">
    <property type="entry name" value="40S ribosomal protein S15a"/>
    <property type="match status" value="1"/>
</dbReference>
<dbReference type="FunFam" id="3.30.1490.10:FF:000002">
    <property type="entry name" value="40S ribosomal protein S15a"/>
    <property type="match status" value="1"/>
</dbReference>
<dbReference type="Gene3D" id="3.30.1370.30">
    <property type="match status" value="1"/>
</dbReference>
<dbReference type="Gene3D" id="3.30.1490.10">
    <property type="match status" value="1"/>
</dbReference>
<dbReference type="HAMAP" id="MF_01302_A">
    <property type="entry name" value="Ribosomal_uS8_A"/>
    <property type="match status" value="1"/>
</dbReference>
<dbReference type="InterPro" id="IPR000630">
    <property type="entry name" value="Ribosomal_uS8"/>
</dbReference>
<dbReference type="InterPro" id="IPR047863">
    <property type="entry name" value="Ribosomal_uS8_CS"/>
</dbReference>
<dbReference type="InterPro" id="IPR035987">
    <property type="entry name" value="Ribosomal_uS8_sf"/>
</dbReference>
<dbReference type="NCBIfam" id="NF003115">
    <property type="entry name" value="PRK04034.1"/>
    <property type="match status" value="1"/>
</dbReference>
<dbReference type="PANTHER" id="PTHR11758">
    <property type="entry name" value="40S RIBOSOMAL PROTEIN S15A"/>
    <property type="match status" value="1"/>
</dbReference>
<dbReference type="Pfam" id="PF00410">
    <property type="entry name" value="Ribosomal_S8"/>
    <property type="match status" value="1"/>
</dbReference>
<dbReference type="SUPFAM" id="SSF56047">
    <property type="entry name" value="Ribosomal protein S8"/>
    <property type="match status" value="1"/>
</dbReference>
<dbReference type="PROSITE" id="PS00053">
    <property type="entry name" value="RIBOSOMAL_S8"/>
    <property type="match status" value="1"/>
</dbReference>